<organism>
    <name type="scientific">Archaeoglobus fulgidus (strain ATCC 49558 / DSM 4304 / JCM 9628 / NBRC 100126 / VC-16)</name>
    <dbReference type="NCBI Taxonomy" id="224325"/>
    <lineage>
        <taxon>Archaea</taxon>
        <taxon>Methanobacteriati</taxon>
        <taxon>Methanobacteriota</taxon>
        <taxon>Archaeoglobi</taxon>
        <taxon>Archaeoglobales</taxon>
        <taxon>Archaeoglobaceae</taxon>
        <taxon>Archaeoglobus</taxon>
    </lineage>
</organism>
<keyword id="KW-0456">Lyase</keyword>
<keyword id="KW-0520">NAD</keyword>
<keyword id="KW-0547">Nucleotide-binding</keyword>
<keyword id="KW-1185">Reference proteome</keyword>
<protein>
    <recommendedName>
        <fullName evidence="1">Ornithine cyclodeaminase</fullName>
        <shortName evidence="1">OCD</shortName>
        <ecNumber evidence="1">4.3.1.12</ecNumber>
    </recommendedName>
    <alternativeName>
        <fullName evidence="1">Archaeal ornithine cyclodeaminase</fullName>
    </alternativeName>
</protein>
<evidence type="ECO:0000250" key="1">
    <source>
        <dbReference type="UniProtKB" id="Q6LXX7"/>
    </source>
</evidence>
<evidence type="ECO:0000250" key="2">
    <source>
        <dbReference type="UniProtKB" id="Q8YMD9"/>
    </source>
</evidence>
<evidence type="ECO:0000305" key="3"/>
<accession>O28990</accession>
<proteinExistence type="inferred from homology"/>
<feature type="chain" id="PRO_0000107364" description="Ornithine cyclodeaminase">
    <location>
        <begin position="1"/>
        <end position="407"/>
    </location>
</feature>
<feature type="binding site" evidence="2">
    <location>
        <position position="233"/>
    </location>
    <ligand>
        <name>NAD(+)</name>
        <dbReference type="ChEBI" id="CHEBI:57540"/>
    </ligand>
</feature>
<feature type="binding site" evidence="2">
    <location>
        <position position="234"/>
    </location>
    <ligand>
        <name>NAD(+)</name>
        <dbReference type="ChEBI" id="CHEBI:57540"/>
    </ligand>
</feature>
<feature type="binding site" evidence="2">
    <location>
        <position position="312"/>
    </location>
    <ligand>
        <name>NAD(+)</name>
        <dbReference type="ChEBI" id="CHEBI:57540"/>
    </ligand>
</feature>
<feature type="binding site" evidence="2">
    <location>
        <position position="344"/>
    </location>
    <ligand>
        <name>NAD(+)</name>
        <dbReference type="ChEBI" id="CHEBI:57540"/>
    </ligand>
</feature>
<feature type="binding site" evidence="2">
    <location>
        <position position="345"/>
    </location>
    <ligand>
        <name>NAD(+)</name>
        <dbReference type="ChEBI" id="CHEBI:57540"/>
    </ligand>
</feature>
<feature type="binding site" evidence="2">
    <location>
        <position position="346"/>
    </location>
    <ligand>
        <name>NAD(+)</name>
        <dbReference type="ChEBI" id="CHEBI:57540"/>
    </ligand>
</feature>
<feature type="binding site" evidence="2">
    <location>
        <position position="347"/>
    </location>
    <ligand>
        <name>NAD(+)</name>
        <dbReference type="ChEBI" id="CHEBI:57540"/>
    </ligand>
</feature>
<feature type="binding site" evidence="2">
    <location>
        <position position="365"/>
    </location>
    <ligand>
        <name>NAD(+)</name>
        <dbReference type="ChEBI" id="CHEBI:57540"/>
    </ligand>
</feature>
<feature type="binding site" evidence="2">
    <location>
        <position position="388"/>
    </location>
    <ligand>
        <name>NAD(+)</name>
        <dbReference type="ChEBI" id="CHEBI:57540"/>
    </ligand>
</feature>
<feature type="binding site" evidence="2">
    <location>
        <position position="389"/>
    </location>
    <ligand>
        <name>NAD(+)</name>
        <dbReference type="ChEBI" id="CHEBI:57540"/>
    </ligand>
</feature>
<name>AOCD_ARCFU</name>
<sequence>MKAREVEFEGHLIDSMIFTKALDIILDLDGEFEILEFRVGKKKDDPSYARMIVFGRDDAHLEQILKELHKIGARIPDIEEVELAEAPADKVLPDGFYVTTNHPTFVRYGGEWLPVEDISMDRVIVIRDGRAYCIPIDEVVRGDRVVVGEKGVRVVPPERPRKSTVFEFMGGRVSSERPTERMIEAIAREIYELKLKGGKIAVVAGPAVDHTSARNALAALIRDGYVDLLLSGNALAVHDIEISIFGTSLGMDICKGRPVPGGNRHHLYTISKVIAAGGIKKAIEKGIIKDGIMYECVKNNVPFILAGSIRDDGPLPEVITDVMVAKKKMKEALRGINMVIMLATMLHSIAVGNLLPSYVKTICVDMNPSTVTKLMDRGTHQAIGVVTDVGLFLPLLYLKIKEIEAKE</sequence>
<gene>
    <name type="ordered locus">AF_1278</name>
</gene>
<reference key="1">
    <citation type="journal article" date="1997" name="Nature">
        <title>The complete genome sequence of the hyperthermophilic, sulphate-reducing archaeon Archaeoglobus fulgidus.</title>
        <authorList>
            <person name="Klenk H.-P."/>
            <person name="Clayton R.A."/>
            <person name="Tomb J.-F."/>
            <person name="White O."/>
            <person name="Nelson K.E."/>
            <person name="Ketchum K.A."/>
            <person name="Dodson R.J."/>
            <person name="Gwinn M.L."/>
            <person name="Hickey E.K."/>
            <person name="Peterson J.D."/>
            <person name="Richardson D.L."/>
            <person name="Kerlavage A.R."/>
            <person name="Graham D.E."/>
            <person name="Kyrpides N.C."/>
            <person name="Fleischmann R.D."/>
            <person name="Quackenbush J."/>
            <person name="Lee N.H."/>
            <person name="Sutton G.G."/>
            <person name="Gill S.R."/>
            <person name="Kirkness E.F."/>
            <person name="Dougherty B.A."/>
            <person name="McKenney K."/>
            <person name="Adams M.D."/>
            <person name="Loftus B.J."/>
            <person name="Peterson S.N."/>
            <person name="Reich C.I."/>
            <person name="McNeil L.K."/>
            <person name="Badger J.H."/>
            <person name="Glodek A."/>
            <person name="Zhou L."/>
            <person name="Overbeek R."/>
            <person name="Gocayne J.D."/>
            <person name="Weidman J.F."/>
            <person name="McDonald L.A."/>
            <person name="Utterback T.R."/>
            <person name="Cotton M.D."/>
            <person name="Spriggs T."/>
            <person name="Artiach P."/>
            <person name="Kaine B.P."/>
            <person name="Sykes S.M."/>
            <person name="Sadow P.W."/>
            <person name="D'Andrea K.P."/>
            <person name="Bowman C."/>
            <person name="Fujii C."/>
            <person name="Garland S.A."/>
            <person name="Mason T.M."/>
            <person name="Olsen G.J."/>
            <person name="Fraser C.M."/>
            <person name="Smith H.O."/>
            <person name="Woese C.R."/>
            <person name="Venter J.C."/>
        </authorList>
    </citation>
    <scope>NUCLEOTIDE SEQUENCE [LARGE SCALE GENOMIC DNA]</scope>
    <source>
        <strain>ATCC 49558 / DSM 4304 / JCM 9628 / NBRC 100126 / VC-16</strain>
    </source>
</reference>
<comment type="function">
    <text evidence="1">Catalyzes the conversion of ornithine to proline, with the release of ammonia.</text>
</comment>
<comment type="catalytic activity">
    <reaction evidence="1">
        <text>L-ornithine = L-proline + NH4(+)</text>
        <dbReference type="Rhea" id="RHEA:24368"/>
        <dbReference type="ChEBI" id="CHEBI:28938"/>
        <dbReference type="ChEBI" id="CHEBI:46911"/>
        <dbReference type="ChEBI" id="CHEBI:60039"/>
        <dbReference type="EC" id="4.3.1.12"/>
    </reaction>
</comment>
<comment type="cofactor">
    <cofactor evidence="2">
        <name>NAD(+)</name>
        <dbReference type="ChEBI" id="CHEBI:57540"/>
    </cofactor>
</comment>
<comment type="similarity">
    <text evidence="3">Belongs to the AgrE/ArgZ ornithine cyclodeaminase family.</text>
</comment>
<dbReference type="EC" id="4.3.1.12" evidence="1"/>
<dbReference type="EMBL" id="AE000782">
    <property type="protein sequence ID" value="AAB89967.1"/>
    <property type="molecule type" value="Genomic_DNA"/>
</dbReference>
<dbReference type="PIR" id="E69409">
    <property type="entry name" value="E69409"/>
</dbReference>
<dbReference type="RefSeq" id="WP_010878773.1">
    <property type="nucleotide sequence ID" value="NC_000917.1"/>
</dbReference>
<dbReference type="SMR" id="O28990"/>
<dbReference type="STRING" id="224325.AF_1278"/>
<dbReference type="PaxDb" id="224325-AF_1278"/>
<dbReference type="DNASU" id="1484502"/>
<dbReference type="EnsemblBacteria" id="AAB89967">
    <property type="protein sequence ID" value="AAB89967"/>
    <property type="gene ID" value="AF_1278"/>
</dbReference>
<dbReference type="GeneID" id="1484502"/>
<dbReference type="KEGG" id="afu:AF_1278"/>
<dbReference type="eggNOG" id="arCOG04422">
    <property type="taxonomic scope" value="Archaea"/>
</dbReference>
<dbReference type="HOGENOM" id="CLU_056125_0_0_2"/>
<dbReference type="OrthoDB" id="64170at2157"/>
<dbReference type="PhylomeDB" id="O28990"/>
<dbReference type="Proteomes" id="UP000002199">
    <property type="component" value="Chromosome"/>
</dbReference>
<dbReference type="CDD" id="cd12144">
    <property type="entry name" value="SDH_N_domain"/>
    <property type="match status" value="1"/>
</dbReference>
<dbReference type="Gene3D" id="2.40.420.10">
    <property type="entry name" value="conserved putative lor/sdh protein from methanococcus maripaludis s2 domain"/>
    <property type="match status" value="1"/>
</dbReference>
<dbReference type="Gene3D" id="3.40.50.10690">
    <property type="entry name" value="putative lor/sdh protein like domains"/>
    <property type="match status" value="1"/>
</dbReference>
<dbReference type="InterPro" id="IPR005239">
    <property type="entry name" value="ArgZ/ArgE-like"/>
</dbReference>
<dbReference type="InterPro" id="IPR048964">
    <property type="entry name" value="ArgZ/ArgE-like_C_1st"/>
</dbReference>
<dbReference type="InterPro" id="IPR048963">
    <property type="entry name" value="ArgZ/ArgE-like_C_2nd"/>
</dbReference>
<dbReference type="InterPro" id="IPR007545">
    <property type="entry name" value="LOR/SDH_bifunc_enz_cons_dom"/>
</dbReference>
<dbReference type="NCBIfam" id="TIGR00300">
    <property type="entry name" value="TIGR00300 family protein"/>
    <property type="match status" value="1"/>
</dbReference>
<dbReference type="Pfam" id="PF21571">
    <property type="entry name" value="ArgZ-like_C_1st"/>
    <property type="match status" value="1"/>
</dbReference>
<dbReference type="Pfam" id="PF21570">
    <property type="entry name" value="ArgZ-like_C_2nd"/>
    <property type="match status" value="1"/>
</dbReference>
<dbReference type="Pfam" id="PF04455">
    <property type="entry name" value="Saccharop_dh_N"/>
    <property type="match status" value="1"/>
</dbReference>